<sequence>MASVAESSGVVEVIELISDGGNDLPRKIMSGRHGGICPRILMPCKTDDDCMLDCRCLSNGYCG</sequence>
<protein>
    <recommendedName>
        <fullName>Trypsin inhibitor 5</fullName>
    </recommendedName>
    <alternativeName>
        <fullName>TGT-II</fullName>
    </alternativeName>
    <alternativeName>
        <fullName>Trypsin inhibitor II</fullName>
    </alternativeName>
</protein>
<accession>P34950</accession>
<reference key="1">
    <citation type="journal article" date="1993" name="J. Biol. Chem.">
        <title>Protein, cDNA, and genomic DNA sequences of the towel gourd trypsin inhibitor. A squash family inhibitor.</title>
        <authorList>
            <person name="Ling M.-H."/>
            <person name="Qi H.-Y."/>
            <person name="Chi C.-W."/>
        </authorList>
    </citation>
    <scope>NUCLEOTIDE SEQUENCE [MRNA]</scope>
    <scope>PARTIAL PROTEIN SEQUENCE</scope>
</reference>
<organism>
    <name type="scientific">Luffa aegyptiaca</name>
    <name type="common">Sponge gourd</name>
    <name type="synonym">Luffa cylindrica</name>
    <dbReference type="NCBI Taxonomy" id="3670"/>
    <lineage>
        <taxon>Eukaryota</taxon>
        <taxon>Viridiplantae</taxon>
        <taxon>Streptophyta</taxon>
        <taxon>Embryophyta</taxon>
        <taxon>Tracheophyta</taxon>
        <taxon>Spermatophyta</taxon>
        <taxon>Magnoliopsida</taxon>
        <taxon>eudicotyledons</taxon>
        <taxon>Gunneridae</taxon>
        <taxon>Pentapetalae</taxon>
        <taxon>rosids</taxon>
        <taxon>fabids</taxon>
        <taxon>Cucurbitales</taxon>
        <taxon>Cucurbitaceae</taxon>
        <taxon>Sicyoeae</taxon>
        <taxon>Luffa</taxon>
    </lineage>
</organism>
<keyword id="KW-0903">Direct protein sequencing</keyword>
<keyword id="KW-1015">Disulfide bond</keyword>
<keyword id="KW-0960">Knottin</keyword>
<keyword id="KW-0646">Protease inhibitor</keyword>
<keyword id="KW-0964">Secreted</keyword>
<keyword id="KW-0722">Serine protease inhibitor</keyword>
<keyword id="KW-0732">Signal</keyword>
<evidence type="ECO:0000250" key="1"/>
<evidence type="ECO:0000255" key="2"/>
<evidence type="ECO:0000305" key="3"/>
<dbReference type="EMBL" id="M98055">
    <property type="protein sequence ID" value="AAA33407.1"/>
    <property type="molecule type" value="mRNA"/>
</dbReference>
<dbReference type="PIR" id="A45041">
    <property type="entry name" value="A45041"/>
</dbReference>
<dbReference type="SMR" id="P34950"/>
<dbReference type="MEROPS" id="I07.011"/>
<dbReference type="GO" id="GO:0005576">
    <property type="term" value="C:extracellular region"/>
    <property type="evidence" value="ECO:0007669"/>
    <property type="project" value="UniProtKB-SubCell"/>
</dbReference>
<dbReference type="GO" id="GO:0004867">
    <property type="term" value="F:serine-type endopeptidase inhibitor activity"/>
    <property type="evidence" value="ECO:0007669"/>
    <property type="project" value="UniProtKB-KW"/>
</dbReference>
<dbReference type="CDD" id="cd00150">
    <property type="entry name" value="PlantTI"/>
    <property type="match status" value="1"/>
</dbReference>
<dbReference type="Gene3D" id="4.10.75.20">
    <property type="match status" value="1"/>
</dbReference>
<dbReference type="InterPro" id="IPR000737">
    <property type="entry name" value="Prot_inh_squash"/>
</dbReference>
<dbReference type="InterPro" id="IPR011052">
    <property type="entry name" value="Proteinase_amylase_inhib_sf"/>
</dbReference>
<dbReference type="Pfam" id="PF00299">
    <property type="entry name" value="Squash"/>
    <property type="match status" value="1"/>
</dbReference>
<dbReference type="SMART" id="SM00286">
    <property type="entry name" value="PTI"/>
    <property type="match status" value="1"/>
</dbReference>
<dbReference type="SUPFAM" id="SSF57027">
    <property type="entry name" value="Plant inhibitors of proteinases and amylases"/>
    <property type="match status" value="1"/>
</dbReference>
<dbReference type="PROSITE" id="PS00286">
    <property type="entry name" value="SQUASH_INHIBITOR"/>
    <property type="match status" value="1"/>
</dbReference>
<feature type="signal peptide" evidence="2">
    <location>
        <begin position="1"/>
        <end position="21"/>
    </location>
</feature>
<feature type="propeptide" id="PRO_0000033208" evidence="2">
    <location>
        <begin position="22"/>
        <end position="34"/>
    </location>
</feature>
<feature type="peptide" id="PRO_0000033209" description="Trypsin inhibitor 5">
    <location>
        <begin position="35"/>
        <end position="63"/>
    </location>
</feature>
<feature type="site" description="Reactive bond">
    <location>
        <begin position="39"/>
        <end position="40"/>
    </location>
</feature>
<feature type="disulfide bond" evidence="1">
    <location>
        <begin position="37"/>
        <end position="54"/>
    </location>
</feature>
<feature type="disulfide bond" evidence="1">
    <location>
        <begin position="44"/>
        <end position="56"/>
    </location>
</feature>
<feature type="disulfide bond" evidence="1">
    <location>
        <begin position="50"/>
        <end position="62"/>
    </location>
</feature>
<name>ITR5_LUFAE</name>
<proteinExistence type="evidence at protein level"/>
<comment type="function">
    <text>Inhibits trypsin.</text>
</comment>
<comment type="subcellular location">
    <subcellularLocation>
        <location>Secreted</location>
    </subcellularLocation>
</comment>
<comment type="domain">
    <text evidence="1">The presence of a 'disulfide through disulfide knot' structurally defines this protein as a knottin.</text>
</comment>
<comment type="similarity">
    <text evidence="3">Belongs to the protease inhibitor I7 (squash-type serine protease inhibitor) family.</text>
</comment>